<evidence type="ECO:0000250" key="1">
    <source>
        <dbReference type="UniProtKB" id="Q9BSU1"/>
    </source>
</evidence>
<evidence type="ECO:0000305" key="2"/>
<accession>Q9VSH9</accession>
<accession>A8WHJ9</accession>
<dbReference type="EMBL" id="AE014296">
    <property type="protein sequence ID" value="AAF50440.1"/>
    <property type="molecule type" value="Genomic_DNA"/>
</dbReference>
<dbReference type="EMBL" id="BT031145">
    <property type="protein sequence ID" value="ABX00767.1"/>
    <property type="molecule type" value="mRNA"/>
</dbReference>
<dbReference type="RefSeq" id="NP_648211.1">
    <property type="nucleotide sequence ID" value="NM_139954.2"/>
</dbReference>
<dbReference type="FunCoup" id="Q9VSH9">
    <property type="interactions" value="723"/>
</dbReference>
<dbReference type="IntAct" id="Q9VSH9">
    <property type="interactions" value="1"/>
</dbReference>
<dbReference type="STRING" id="7227.FBpp0076331"/>
<dbReference type="PaxDb" id="7227-FBpp0076331"/>
<dbReference type="DNASU" id="38943"/>
<dbReference type="EnsemblMetazoa" id="FBtr0076604">
    <property type="protein sequence ID" value="FBpp0076331"/>
    <property type="gene ID" value="FBgn0035877"/>
</dbReference>
<dbReference type="GeneID" id="38943"/>
<dbReference type="KEGG" id="dme:Dmel_CG7083"/>
<dbReference type="UCSC" id="CG7083-RA">
    <property type="organism name" value="d. melanogaster"/>
</dbReference>
<dbReference type="AGR" id="FB:FBgn0035877"/>
<dbReference type="FlyBase" id="FBgn0035877">
    <property type="gene designation" value="CG7083"/>
</dbReference>
<dbReference type="VEuPathDB" id="VectorBase:FBgn0035877"/>
<dbReference type="eggNOG" id="KOG2819">
    <property type="taxonomic scope" value="Eukaryota"/>
</dbReference>
<dbReference type="GeneTree" id="ENSGT00940000153528"/>
<dbReference type="HOGENOM" id="CLU_032056_0_0_1"/>
<dbReference type="InParanoid" id="Q9VSH9"/>
<dbReference type="OMA" id="YRKNDQK"/>
<dbReference type="OrthoDB" id="411211at2759"/>
<dbReference type="PhylomeDB" id="Q9VSH9"/>
<dbReference type="BioGRID-ORCS" id="38943">
    <property type="hits" value="0 hits in 1 CRISPR screen"/>
</dbReference>
<dbReference type="GenomeRNAi" id="38943"/>
<dbReference type="PRO" id="PR:Q9VSH9"/>
<dbReference type="Proteomes" id="UP000000803">
    <property type="component" value="Chromosome 3L"/>
</dbReference>
<dbReference type="Bgee" id="FBgn0035877">
    <property type="expression patterns" value="Expressed in muscle cell in body wall and 156 other cell types or tissues"/>
</dbReference>
<dbReference type="GO" id="GO:0000407">
    <property type="term" value="C:phagophore assembly site"/>
    <property type="evidence" value="ECO:0000250"/>
    <property type="project" value="UniProtKB"/>
</dbReference>
<dbReference type="GO" id="GO:0005802">
    <property type="term" value="C:trans-Golgi network"/>
    <property type="evidence" value="ECO:0000318"/>
    <property type="project" value="GO_Central"/>
</dbReference>
<dbReference type="GO" id="GO:0043001">
    <property type="term" value="P:Golgi to plasma membrane protein transport"/>
    <property type="evidence" value="ECO:0000318"/>
    <property type="project" value="GO_Central"/>
</dbReference>
<dbReference type="InterPro" id="IPR005373">
    <property type="entry name" value="PHAF1"/>
</dbReference>
<dbReference type="InterPro" id="IPR039156">
    <property type="entry name" value="PHAF1/BROMI"/>
</dbReference>
<dbReference type="PANTHER" id="PTHR13465:SF2">
    <property type="entry name" value="PHAGOSOME ASSEMBLY FACTOR 1"/>
    <property type="match status" value="1"/>
</dbReference>
<dbReference type="PANTHER" id="PTHR13465">
    <property type="entry name" value="UPF0183 PROTEIN"/>
    <property type="match status" value="1"/>
</dbReference>
<dbReference type="Pfam" id="PF03676">
    <property type="entry name" value="PHAF1"/>
    <property type="match status" value="1"/>
</dbReference>
<reference key="1">
    <citation type="journal article" date="2000" name="Science">
        <title>The genome sequence of Drosophila melanogaster.</title>
        <authorList>
            <person name="Adams M.D."/>
            <person name="Celniker S.E."/>
            <person name="Holt R.A."/>
            <person name="Evans C.A."/>
            <person name="Gocayne J.D."/>
            <person name="Amanatides P.G."/>
            <person name="Scherer S.E."/>
            <person name="Li P.W."/>
            <person name="Hoskins R.A."/>
            <person name="Galle R.F."/>
            <person name="George R.A."/>
            <person name="Lewis S.E."/>
            <person name="Richards S."/>
            <person name="Ashburner M."/>
            <person name="Henderson S.N."/>
            <person name="Sutton G.G."/>
            <person name="Wortman J.R."/>
            <person name="Yandell M.D."/>
            <person name="Zhang Q."/>
            <person name="Chen L.X."/>
            <person name="Brandon R.C."/>
            <person name="Rogers Y.-H.C."/>
            <person name="Blazej R.G."/>
            <person name="Champe M."/>
            <person name="Pfeiffer B.D."/>
            <person name="Wan K.H."/>
            <person name="Doyle C."/>
            <person name="Baxter E.G."/>
            <person name="Helt G."/>
            <person name="Nelson C.R."/>
            <person name="Miklos G.L.G."/>
            <person name="Abril J.F."/>
            <person name="Agbayani A."/>
            <person name="An H.-J."/>
            <person name="Andrews-Pfannkoch C."/>
            <person name="Baldwin D."/>
            <person name="Ballew R.M."/>
            <person name="Basu A."/>
            <person name="Baxendale J."/>
            <person name="Bayraktaroglu L."/>
            <person name="Beasley E.M."/>
            <person name="Beeson K.Y."/>
            <person name="Benos P.V."/>
            <person name="Berman B.P."/>
            <person name="Bhandari D."/>
            <person name="Bolshakov S."/>
            <person name="Borkova D."/>
            <person name="Botchan M.R."/>
            <person name="Bouck J."/>
            <person name="Brokstein P."/>
            <person name="Brottier P."/>
            <person name="Burtis K.C."/>
            <person name="Busam D.A."/>
            <person name="Butler H."/>
            <person name="Cadieu E."/>
            <person name="Center A."/>
            <person name="Chandra I."/>
            <person name="Cherry J.M."/>
            <person name="Cawley S."/>
            <person name="Dahlke C."/>
            <person name="Davenport L.B."/>
            <person name="Davies P."/>
            <person name="de Pablos B."/>
            <person name="Delcher A."/>
            <person name="Deng Z."/>
            <person name="Mays A.D."/>
            <person name="Dew I."/>
            <person name="Dietz S.M."/>
            <person name="Dodson K."/>
            <person name="Doup L.E."/>
            <person name="Downes M."/>
            <person name="Dugan-Rocha S."/>
            <person name="Dunkov B.C."/>
            <person name="Dunn P."/>
            <person name="Durbin K.J."/>
            <person name="Evangelista C.C."/>
            <person name="Ferraz C."/>
            <person name="Ferriera S."/>
            <person name="Fleischmann W."/>
            <person name="Fosler C."/>
            <person name="Gabrielian A.E."/>
            <person name="Garg N.S."/>
            <person name="Gelbart W.M."/>
            <person name="Glasser K."/>
            <person name="Glodek A."/>
            <person name="Gong F."/>
            <person name="Gorrell J.H."/>
            <person name="Gu Z."/>
            <person name="Guan P."/>
            <person name="Harris M."/>
            <person name="Harris N.L."/>
            <person name="Harvey D.A."/>
            <person name="Heiman T.J."/>
            <person name="Hernandez J.R."/>
            <person name="Houck J."/>
            <person name="Hostin D."/>
            <person name="Houston K.A."/>
            <person name="Howland T.J."/>
            <person name="Wei M.-H."/>
            <person name="Ibegwam C."/>
            <person name="Jalali M."/>
            <person name="Kalush F."/>
            <person name="Karpen G.H."/>
            <person name="Ke Z."/>
            <person name="Kennison J.A."/>
            <person name="Ketchum K.A."/>
            <person name="Kimmel B.E."/>
            <person name="Kodira C.D."/>
            <person name="Kraft C.L."/>
            <person name="Kravitz S."/>
            <person name="Kulp D."/>
            <person name="Lai Z."/>
            <person name="Lasko P."/>
            <person name="Lei Y."/>
            <person name="Levitsky A.A."/>
            <person name="Li J.H."/>
            <person name="Li Z."/>
            <person name="Liang Y."/>
            <person name="Lin X."/>
            <person name="Liu X."/>
            <person name="Mattei B."/>
            <person name="McIntosh T.C."/>
            <person name="McLeod M.P."/>
            <person name="McPherson D."/>
            <person name="Merkulov G."/>
            <person name="Milshina N.V."/>
            <person name="Mobarry C."/>
            <person name="Morris J."/>
            <person name="Moshrefi A."/>
            <person name="Mount S.M."/>
            <person name="Moy M."/>
            <person name="Murphy B."/>
            <person name="Murphy L."/>
            <person name="Muzny D.M."/>
            <person name="Nelson D.L."/>
            <person name="Nelson D.R."/>
            <person name="Nelson K.A."/>
            <person name="Nixon K."/>
            <person name="Nusskern D.R."/>
            <person name="Pacleb J.M."/>
            <person name="Palazzolo M."/>
            <person name="Pittman G.S."/>
            <person name="Pan S."/>
            <person name="Pollard J."/>
            <person name="Puri V."/>
            <person name="Reese M.G."/>
            <person name="Reinert K."/>
            <person name="Remington K."/>
            <person name="Saunders R.D.C."/>
            <person name="Scheeler F."/>
            <person name="Shen H."/>
            <person name="Shue B.C."/>
            <person name="Siden-Kiamos I."/>
            <person name="Simpson M."/>
            <person name="Skupski M.P."/>
            <person name="Smith T.J."/>
            <person name="Spier E."/>
            <person name="Spradling A.C."/>
            <person name="Stapleton M."/>
            <person name="Strong R."/>
            <person name="Sun E."/>
            <person name="Svirskas R."/>
            <person name="Tector C."/>
            <person name="Turner R."/>
            <person name="Venter E."/>
            <person name="Wang A.H."/>
            <person name="Wang X."/>
            <person name="Wang Z.-Y."/>
            <person name="Wassarman D.A."/>
            <person name="Weinstock G.M."/>
            <person name="Weissenbach J."/>
            <person name="Williams S.M."/>
            <person name="Woodage T."/>
            <person name="Worley K.C."/>
            <person name="Wu D."/>
            <person name="Yang S."/>
            <person name="Yao Q.A."/>
            <person name="Ye J."/>
            <person name="Yeh R.-F."/>
            <person name="Zaveri J.S."/>
            <person name="Zhan M."/>
            <person name="Zhang G."/>
            <person name="Zhao Q."/>
            <person name="Zheng L."/>
            <person name="Zheng X.H."/>
            <person name="Zhong F.N."/>
            <person name="Zhong W."/>
            <person name="Zhou X."/>
            <person name="Zhu S.C."/>
            <person name="Zhu X."/>
            <person name="Smith H.O."/>
            <person name="Gibbs R.A."/>
            <person name="Myers E.W."/>
            <person name="Rubin G.M."/>
            <person name="Venter J.C."/>
        </authorList>
    </citation>
    <scope>NUCLEOTIDE SEQUENCE [LARGE SCALE GENOMIC DNA]</scope>
    <source>
        <strain>Berkeley</strain>
    </source>
</reference>
<reference key="2">
    <citation type="journal article" date="2002" name="Genome Biol.">
        <title>Annotation of the Drosophila melanogaster euchromatic genome: a systematic review.</title>
        <authorList>
            <person name="Misra S."/>
            <person name="Crosby M.A."/>
            <person name="Mungall C.J."/>
            <person name="Matthews B.B."/>
            <person name="Campbell K.S."/>
            <person name="Hradecky P."/>
            <person name="Huang Y."/>
            <person name="Kaminker J.S."/>
            <person name="Millburn G.H."/>
            <person name="Prochnik S.E."/>
            <person name="Smith C.D."/>
            <person name="Tupy J.L."/>
            <person name="Whitfield E.J."/>
            <person name="Bayraktaroglu L."/>
            <person name="Berman B.P."/>
            <person name="Bettencourt B.R."/>
            <person name="Celniker S.E."/>
            <person name="de Grey A.D.N.J."/>
            <person name="Drysdale R.A."/>
            <person name="Harris N.L."/>
            <person name="Richter J."/>
            <person name="Russo S."/>
            <person name="Schroeder A.J."/>
            <person name="Shu S.Q."/>
            <person name="Stapleton M."/>
            <person name="Yamada C."/>
            <person name="Ashburner M."/>
            <person name="Gelbart W.M."/>
            <person name="Rubin G.M."/>
            <person name="Lewis S.E."/>
        </authorList>
    </citation>
    <scope>GENOME REANNOTATION</scope>
    <source>
        <strain>Berkeley</strain>
    </source>
</reference>
<reference key="3">
    <citation type="submission" date="2007-11" db="EMBL/GenBank/DDBJ databases">
        <authorList>
            <person name="Stapleton M."/>
            <person name="Carlson J.W."/>
            <person name="Frise E."/>
            <person name="Kapadia B."/>
            <person name="Park S."/>
            <person name="Wan K.H."/>
            <person name="Yu C."/>
            <person name="Celniker S.E."/>
        </authorList>
    </citation>
    <scope>NUCLEOTIDE SEQUENCE [LARGE SCALE MRNA]</scope>
    <source>
        <strain>Berkeley</strain>
        <tissue>Larva</tissue>
        <tissue>Pupae</tissue>
    </source>
</reference>
<name>PHAF1_DROME</name>
<keyword id="KW-0963">Cytoplasm</keyword>
<keyword id="KW-1185">Reference proteome</keyword>
<protein>
    <recommendedName>
        <fullName>PHAF1 protein CG7083</fullName>
    </recommendedName>
</protein>
<sequence>MLDLEIVPEISLGCDAWEFVLGMHFSQAIAIIQSQVGIIKGVQVLYSDTTPLGVDIIINLPQDGVRLIFDPVSQRLKTIEVFNMKLVKLRYFGVYFNSPEVLPSIEQIEHSFGATHPGVYDAAKQLFALHFRGLSFYFPVDSKLHSGYAHGLSSLVFLNGASPVVSKMSLYAGSNVLENRVPSLPLSCYHRQMYLESATVLRTAFGHTKGLKLKLFTEGSGRALEPRRQCFTRELLFGDSCEDVATSLGAPNRIFFKSEDKMKIHSSSVNRQAQSKRSDIFFNYFTLGIDVLFDARTQTCKKFILHTNYPGHFNFNMYHRCEFQFLLQADHPSMSDSGHDLVTPTKQEHVNITAYTKWDAISSALATSERPVVLHRASSTNTANPFGSTFCYGYQDLIFEVMPNSHIASVTLYNTAPPRQPAHSWQQHKMQDIRLTVA</sequence>
<organism>
    <name type="scientific">Drosophila melanogaster</name>
    <name type="common">Fruit fly</name>
    <dbReference type="NCBI Taxonomy" id="7227"/>
    <lineage>
        <taxon>Eukaryota</taxon>
        <taxon>Metazoa</taxon>
        <taxon>Ecdysozoa</taxon>
        <taxon>Arthropoda</taxon>
        <taxon>Hexapoda</taxon>
        <taxon>Insecta</taxon>
        <taxon>Pterygota</taxon>
        <taxon>Neoptera</taxon>
        <taxon>Endopterygota</taxon>
        <taxon>Diptera</taxon>
        <taxon>Brachycera</taxon>
        <taxon>Muscomorpha</taxon>
        <taxon>Ephydroidea</taxon>
        <taxon>Drosophilidae</taxon>
        <taxon>Drosophila</taxon>
        <taxon>Sophophora</taxon>
    </lineage>
</organism>
<gene>
    <name type="ORF">CG7083</name>
</gene>
<proteinExistence type="evidence at transcript level"/>
<comment type="function">
    <text evidence="1">May play a regulatory role in autophagic activity.</text>
</comment>
<comment type="subcellular location">
    <subcellularLocation>
        <location evidence="1">Cytoplasm</location>
    </subcellularLocation>
    <subcellularLocation>
        <location evidence="1">Preautophagosomal structure</location>
    </subcellularLocation>
    <text evidence="1">The BCAS3:PHAF1 complex is recruited to the preautophagosomal structures adjacent to the damaged mitochondria upon mitophagy in a PRKN-PINK1 dependent manner.</text>
</comment>
<comment type="similarity">
    <text evidence="2">Belongs to the PHAF1 family.</text>
</comment>
<feature type="chain" id="PRO_0000221087" description="PHAF1 protein CG7083">
    <location>
        <begin position="1"/>
        <end position="438"/>
    </location>
</feature>